<gene>
    <name type="primary">y05J</name>
    <name type="synonym">mobD.2</name>
    <name type="synonym">tk.-8</name>
</gene>
<sequence length="34" mass="4206">MKVLFVIYVMIQYNYPMFTYNLVNNIINMIQRSM</sequence>
<dbReference type="EMBL" id="U76612">
    <property type="protein sequence ID" value="AAB26968.1"/>
    <property type="molecule type" value="Genomic_DNA"/>
</dbReference>
<dbReference type="EMBL" id="AF158101">
    <property type="protein sequence ID" value="AAD42594.1"/>
    <property type="molecule type" value="Genomic_DNA"/>
</dbReference>
<dbReference type="RefSeq" id="NP_049712.1">
    <property type="nucleotide sequence ID" value="NC_000866.4"/>
</dbReference>
<dbReference type="GeneID" id="1258550"/>
<dbReference type="KEGG" id="vg:1258550"/>
<dbReference type="OrthoDB" id="29172at10239"/>
<dbReference type="Proteomes" id="UP000009087">
    <property type="component" value="Segment"/>
</dbReference>
<keyword id="KW-1185">Reference proteome</keyword>
<protein>
    <recommendedName>
        <fullName>Uncharacterized 4.2 kDa protein in mobD-ri intergenic region</fullName>
    </recommendedName>
</protein>
<proteinExistence type="predicted"/>
<organismHost>
    <name type="scientific">Escherichia coli</name>
    <dbReference type="NCBI Taxonomy" id="562"/>
</organismHost>
<name>Y05J_BPT4</name>
<reference key="1">
    <citation type="submission" date="1996-11" db="EMBL/GenBank/DDBJ databases">
        <title>The 10.7 kb 'nonessential' region of bacteriophage T4 between the genes tk and nrdC: twenty new t4 genes, generally conserved among T-even phages.</title>
        <authorList>
            <person name="Mzhavia N."/>
            <person name="Marusich E."/>
            <person name="Djavakhishvili T."/>
            <person name="Neitzel J."/>
            <person name="Peterson S."/>
            <person name="Awaya M."/>
            <person name="Eidermiller J."/>
            <person name="Canada D."/>
            <person name="Tracy J."/>
            <person name="Gailbreath K."/>
            <person name="Paddison P."/>
            <person name="Anderson B."/>
            <person name="Stidham T."/>
            <person name="Blattner F."/>
            <person name="Kutter E.M."/>
        </authorList>
    </citation>
    <scope>NUCLEOTIDE SEQUENCE [GENOMIC DNA]</scope>
</reference>
<reference key="2">
    <citation type="journal article" date="2003" name="Microbiol. Mol. Biol. Rev.">
        <title>Bacteriophage T4 genome.</title>
        <authorList>
            <person name="Miller E.S."/>
            <person name="Kutter E."/>
            <person name="Mosig G."/>
            <person name="Arisaka F."/>
            <person name="Kunisawa T."/>
            <person name="Ruger W."/>
        </authorList>
    </citation>
    <scope>NUCLEOTIDE SEQUENCE [LARGE SCALE GENOMIC DNA]</scope>
</reference>
<organism>
    <name type="scientific">Enterobacteria phage T4</name>
    <name type="common">Bacteriophage T4</name>
    <dbReference type="NCBI Taxonomy" id="10665"/>
    <lineage>
        <taxon>Viruses</taxon>
        <taxon>Duplodnaviria</taxon>
        <taxon>Heunggongvirae</taxon>
        <taxon>Uroviricota</taxon>
        <taxon>Caudoviricetes</taxon>
        <taxon>Straboviridae</taxon>
        <taxon>Tevenvirinae</taxon>
        <taxon>Tequatrovirus</taxon>
    </lineage>
</organism>
<feature type="chain" id="PRO_0000165127" description="Uncharacterized 4.2 kDa protein in mobD-ri intergenic region">
    <location>
        <begin position="1"/>
        <end position="34"/>
    </location>
</feature>
<accession>P39239</accession>